<keyword id="KW-0963">Cytoplasm</keyword>
<keyword id="KW-0489">Methyltransferase</keyword>
<keyword id="KW-1185">Reference proteome</keyword>
<keyword id="KW-0949">S-adenosyl-L-methionine</keyword>
<keyword id="KW-0808">Transferase</keyword>
<keyword id="KW-0819">tRNA processing</keyword>
<accession>B8F7X3</accession>
<reference key="1">
    <citation type="journal article" date="2009" name="J. Bacteriol.">
        <title>Complete genome sequence of Haemophilus parasuis SH0165.</title>
        <authorList>
            <person name="Yue M."/>
            <person name="Yang F."/>
            <person name="Yang J."/>
            <person name="Bei W."/>
            <person name="Cai X."/>
            <person name="Chen L."/>
            <person name="Dong J."/>
            <person name="Zhou R."/>
            <person name="Jin M."/>
            <person name="Jin Q."/>
            <person name="Chen H."/>
        </authorList>
    </citation>
    <scope>NUCLEOTIDE SEQUENCE [LARGE SCALE GENOMIC DNA]</scope>
    <source>
        <strain>SH0165</strain>
    </source>
</reference>
<name>TRMD_GLAP5</name>
<dbReference type="EC" id="2.1.1.228" evidence="1"/>
<dbReference type="EMBL" id="CP001321">
    <property type="protein sequence ID" value="ACL33425.1"/>
    <property type="molecule type" value="Genomic_DNA"/>
</dbReference>
<dbReference type="RefSeq" id="WP_015939991.1">
    <property type="nucleotide sequence ID" value="NC_011852.1"/>
</dbReference>
<dbReference type="SMR" id="B8F7X3"/>
<dbReference type="STRING" id="557723.HAPS_1941"/>
<dbReference type="KEGG" id="hap:HAPS_1941"/>
<dbReference type="PATRIC" id="fig|557723.8.peg.1927"/>
<dbReference type="HOGENOM" id="CLU_047363_0_1_6"/>
<dbReference type="Proteomes" id="UP000006743">
    <property type="component" value="Chromosome"/>
</dbReference>
<dbReference type="GO" id="GO:0005829">
    <property type="term" value="C:cytosol"/>
    <property type="evidence" value="ECO:0007669"/>
    <property type="project" value="TreeGrafter"/>
</dbReference>
<dbReference type="GO" id="GO:0052906">
    <property type="term" value="F:tRNA (guanine(37)-N1)-methyltransferase activity"/>
    <property type="evidence" value="ECO:0007669"/>
    <property type="project" value="UniProtKB-UniRule"/>
</dbReference>
<dbReference type="GO" id="GO:0002939">
    <property type="term" value="P:tRNA N1-guanine methylation"/>
    <property type="evidence" value="ECO:0007669"/>
    <property type="project" value="TreeGrafter"/>
</dbReference>
<dbReference type="CDD" id="cd18080">
    <property type="entry name" value="TrmD-like"/>
    <property type="match status" value="1"/>
</dbReference>
<dbReference type="FunFam" id="1.10.1270.20:FF:000001">
    <property type="entry name" value="tRNA (guanine-N(1)-)-methyltransferase"/>
    <property type="match status" value="1"/>
</dbReference>
<dbReference type="FunFam" id="3.40.1280.10:FF:000001">
    <property type="entry name" value="tRNA (guanine-N(1)-)-methyltransferase"/>
    <property type="match status" value="1"/>
</dbReference>
<dbReference type="Gene3D" id="3.40.1280.10">
    <property type="match status" value="1"/>
</dbReference>
<dbReference type="Gene3D" id="1.10.1270.20">
    <property type="entry name" value="tRNA(m1g37)methyltransferase, domain 2"/>
    <property type="match status" value="1"/>
</dbReference>
<dbReference type="HAMAP" id="MF_00605">
    <property type="entry name" value="TrmD"/>
    <property type="match status" value="1"/>
</dbReference>
<dbReference type="InterPro" id="IPR029028">
    <property type="entry name" value="Alpha/beta_knot_MTases"/>
</dbReference>
<dbReference type="InterPro" id="IPR023148">
    <property type="entry name" value="tRNA_m1G_MeTrfase_C_sf"/>
</dbReference>
<dbReference type="InterPro" id="IPR002649">
    <property type="entry name" value="tRNA_m1G_MeTrfase_TrmD"/>
</dbReference>
<dbReference type="InterPro" id="IPR029026">
    <property type="entry name" value="tRNA_m1G_MTases_N"/>
</dbReference>
<dbReference type="InterPro" id="IPR016009">
    <property type="entry name" value="tRNA_MeTrfase_TRMD/TRM10"/>
</dbReference>
<dbReference type="NCBIfam" id="NF000648">
    <property type="entry name" value="PRK00026.1"/>
    <property type="match status" value="1"/>
</dbReference>
<dbReference type="NCBIfam" id="TIGR00088">
    <property type="entry name" value="trmD"/>
    <property type="match status" value="1"/>
</dbReference>
<dbReference type="PANTHER" id="PTHR46417">
    <property type="entry name" value="TRNA (GUANINE-N(1)-)-METHYLTRANSFERASE"/>
    <property type="match status" value="1"/>
</dbReference>
<dbReference type="PANTHER" id="PTHR46417:SF1">
    <property type="entry name" value="TRNA (GUANINE-N(1)-)-METHYLTRANSFERASE"/>
    <property type="match status" value="1"/>
</dbReference>
<dbReference type="Pfam" id="PF01746">
    <property type="entry name" value="tRNA_m1G_MT"/>
    <property type="match status" value="1"/>
</dbReference>
<dbReference type="PIRSF" id="PIRSF000386">
    <property type="entry name" value="tRNA_mtase"/>
    <property type="match status" value="1"/>
</dbReference>
<dbReference type="SUPFAM" id="SSF75217">
    <property type="entry name" value="alpha/beta knot"/>
    <property type="match status" value="1"/>
</dbReference>
<protein>
    <recommendedName>
        <fullName evidence="1">tRNA (guanine-N(1)-)-methyltransferase</fullName>
        <ecNumber evidence="1">2.1.1.228</ecNumber>
    </recommendedName>
    <alternativeName>
        <fullName evidence="1">M1G-methyltransferase</fullName>
    </alternativeName>
    <alternativeName>
        <fullName evidence="1">tRNA [GM37] methyltransferase</fullName>
    </alternativeName>
</protein>
<sequence length="255" mass="28800">MWIGIISLFPEMFKAITDFGVTGRAVKQNLLQVQCWNPRDFTHDKHKTVDDRPYGGGPGMLMMVQPLRDAIREAKATACKEDGVEAKVIYLSPQGRKLDQAGVQTLATNQKLILVCGRYEGIDERLIQTEIDEEWSIGDYVLTGGELPAMTLIDAVARFIPGVLGKQTSALEDSFAEGLLDCPHYTRPEVLDGLPVPQVLMSGHHEQIRKWRLEQSLKRTWLRRPELLDSLALTDEQRVLLNNIKKRHKSVNSRT</sequence>
<comment type="function">
    <text evidence="1">Specifically methylates guanosine-37 in various tRNAs.</text>
</comment>
<comment type="catalytic activity">
    <reaction evidence="1">
        <text>guanosine(37) in tRNA + S-adenosyl-L-methionine = N(1)-methylguanosine(37) in tRNA + S-adenosyl-L-homocysteine + H(+)</text>
        <dbReference type="Rhea" id="RHEA:36899"/>
        <dbReference type="Rhea" id="RHEA-COMP:10145"/>
        <dbReference type="Rhea" id="RHEA-COMP:10147"/>
        <dbReference type="ChEBI" id="CHEBI:15378"/>
        <dbReference type="ChEBI" id="CHEBI:57856"/>
        <dbReference type="ChEBI" id="CHEBI:59789"/>
        <dbReference type="ChEBI" id="CHEBI:73542"/>
        <dbReference type="ChEBI" id="CHEBI:74269"/>
        <dbReference type="EC" id="2.1.1.228"/>
    </reaction>
</comment>
<comment type="subunit">
    <text evidence="1">Homodimer.</text>
</comment>
<comment type="subcellular location">
    <subcellularLocation>
        <location evidence="1">Cytoplasm</location>
    </subcellularLocation>
</comment>
<comment type="similarity">
    <text evidence="1">Belongs to the RNA methyltransferase TrmD family.</text>
</comment>
<feature type="chain" id="PRO_1000198573" description="tRNA (guanine-N(1)-)-methyltransferase">
    <location>
        <begin position="1"/>
        <end position="255"/>
    </location>
</feature>
<feature type="binding site" evidence="1">
    <location>
        <position position="117"/>
    </location>
    <ligand>
        <name>S-adenosyl-L-methionine</name>
        <dbReference type="ChEBI" id="CHEBI:59789"/>
    </ligand>
</feature>
<feature type="binding site" evidence="1">
    <location>
        <begin position="137"/>
        <end position="142"/>
    </location>
    <ligand>
        <name>S-adenosyl-L-methionine</name>
        <dbReference type="ChEBI" id="CHEBI:59789"/>
    </ligand>
</feature>
<organism>
    <name type="scientific">Glaesserella parasuis serovar 5 (strain SH0165)</name>
    <name type="common">Haemophilus parasuis</name>
    <dbReference type="NCBI Taxonomy" id="557723"/>
    <lineage>
        <taxon>Bacteria</taxon>
        <taxon>Pseudomonadati</taxon>
        <taxon>Pseudomonadota</taxon>
        <taxon>Gammaproteobacteria</taxon>
        <taxon>Pasteurellales</taxon>
        <taxon>Pasteurellaceae</taxon>
        <taxon>Glaesserella</taxon>
    </lineage>
</organism>
<proteinExistence type="inferred from homology"/>
<gene>
    <name evidence="1" type="primary">trmD</name>
    <name type="ordered locus">HAPS_1941</name>
</gene>
<evidence type="ECO:0000255" key="1">
    <source>
        <dbReference type="HAMAP-Rule" id="MF_00605"/>
    </source>
</evidence>